<keyword id="KW-0106">Calcium</keyword>
<keyword id="KW-1015">Disulfide bond</keyword>
<keyword id="KW-0256">Endoplasmic reticulum</keyword>
<keyword id="KW-0325">Glycoprotein</keyword>
<keyword id="KW-0378">Hydrolase</keyword>
<keyword id="KW-0443">Lipid metabolism</keyword>
<keyword id="KW-0472">Membrane</keyword>
<keyword id="KW-0479">Metal-binding</keyword>
<keyword id="KW-0492">Microsome</keyword>
<keyword id="KW-0635">Pregnancy</keyword>
<keyword id="KW-1185">Reference proteome</keyword>
<keyword id="KW-0732">Signal</keyword>
<keyword id="KW-0753">Steroid metabolism</keyword>
<keyword id="KW-0812">Transmembrane</keyword>
<keyword id="KW-1133">Transmembrane helix</keyword>
<gene>
    <name type="primary">Sts</name>
</gene>
<reference key="1">
    <citation type="journal article" date="1996" name="Nat. Genet.">
        <title>Cloning and expression of the mouse pseudoautosomal steroid sulphatase gene (Sts).</title>
        <authorList>
            <person name="Salido E.C."/>
            <person name="Li X.M."/>
            <person name="Yen P.H."/>
            <person name="Martin N."/>
            <person name="Mohandas T.K."/>
            <person name="Shapiro L.J."/>
        </authorList>
    </citation>
    <scope>NUCLEOTIDE SEQUENCE [MRNA]</scope>
    <source>
        <strain>BALB/cJ</strain>
    </source>
</reference>
<reference key="2">
    <citation type="journal article" date="2010" name="Cell">
        <title>A tissue-specific atlas of mouse protein phosphorylation and expression.</title>
        <authorList>
            <person name="Huttlin E.L."/>
            <person name="Jedrychowski M.P."/>
            <person name="Elias J.E."/>
            <person name="Goswami T."/>
            <person name="Rad R."/>
            <person name="Beausoleil S.A."/>
            <person name="Villen J."/>
            <person name="Haas W."/>
            <person name="Sowa M.E."/>
            <person name="Gygi S.P."/>
        </authorList>
    </citation>
    <scope>IDENTIFICATION BY MASS SPECTROMETRY [LARGE SCALE ANALYSIS]</scope>
    <source>
        <tissue>Liver</tissue>
        <tissue>Lung</tissue>
        <tissue>Spleen</tissue>
        <tissue>Testis</tissue>
    </source>
</reference>
<organism>
    <name type="scientific">Mus musculus</name>
    <name type="common">Mouse</name>
    <dbReference type="NCBI Taxonomy" id="10090"/>
    <lineage>
        <taxon>Eukaryota</taxon>
        <taxon>Metazoa</taxon>
        <taxon>Chordata</taxon>
        <taxon>Craniata</taxon>
        <taxon>Vertebrata</taxon>
        <taxon>Euteleostomi</taxon>
        <taxon>Mammalia</taxon>
        <taxon>Eutheria</taxon>
        <taxon>Euarchontoglires</taxon>
        <taxon>Glires</taxon>
        <taxon>Rodentia</taxon>
        <taxon>Myomorpha</taxon>
        <taxon>Muroidea</taxon>
        <taxon>Muridae</taxon>
        <taxon>Murinae</taxon>
        <taxon>Mus</taxon>
        <taxon>Mus</taxon>
    </lineage>
</organism>
<proteinExistence type="evidence at protein level"/>
<protein>
    <recommendedName>
        <fullName>Steryl-sulfatase</fullName>
        <ecNumber evidence="2">3.1.6.2</ecNumber>
    </recommendedName>
    <alternativeName>
        <fullName>Arylsulfatase C</fullName>
        <shortName>ASC</shortName>
    </alternativeName>
    <alternativeName>
        <fullName>Steroid sulfatase</fullName>
    </alternativeName>
    <alternativeName>
        <fullName>Steryl-sulfate sulfohydrolase</fullName>
    </alternativeName>
</protein>
<name>STS_MOUSE</name>
<sequence>MPRPRPLLLAVMAATLADIILAADPAPAGPAPRPPNFLLIMADDLGIGDLGCYGNKTLRTPHLDRLAREGVKLTQHLAAAPLCTPSRAAFLTGRYPPRSGMAAHGRVGVYLFTASSGGLPPSEVTMARLLKGRGYATALIGKWHLGLSCRGATDFCHHPLRHGFDRFLGVPTTNLRDCRPGAGTVFGPALRVFAAGPLAALGASLAAMAAARWAGLARVPGWALAGTAAAMLAVGGPRSASCLGFRPANCFLMDDLAVAQRPTDYGGLTRRLADEAALFLRRNRARPFLLFLSFLHVHTAHFADPGFAGRSLHGAYGDSVEEMDWGVGRVLAALDELGLARETLVYFTSDHGAHVEELGPRGERMGGSNGVFRGGKGNNWEGGVRVPCLVRWPRELSPGRVVAEPTSLMDVFPTVARLAGAELPGDRVIDGRDLMPLLRGDAQRSEHEFLFHYCNAYLQAVRWHNGSAVWKAFYFTPNFAPAGANGCFSTHVCLCAGPAHVTAHDPPLLFDLTRDPGERRPLTPEAEPRHREVLDAIDAAARAHRARLRPAPDQLAPRHLMWKPWLQLWGGGGAGGGAGAQDDSGHAHGDGSHAHDDPGHAQDRGDDDAHYGGHATTRTQATPR</sequence>
<feature type="signal peptide" evidence="3">
    <location>
        <begin position="1"/>
        <end position="22"/>
    </location>
</feature>
<feature type="chain" id="PRO_0000033415" description="Steryl-sulfatase">
    <location>
        <begin position="23"/>
        <end position="624"/>
    </location>
</feature>
<feature type="topological domain" description="Lumenal" evidence="2">
    <location>
        <begin position="24"/>
        <end position="192"/>
    </location>
</feature>
<feature type="transmembrane region" description="Helical" evidence="2">
    <location>
        <begin position="193"/>
        <end position="216"/>
    </location>
</feature>
<feature type="topological domain" description="Cytoplasmic" evidence="2">
    <location>
        <begin position="217"/>
        <end position="220"/>
    </location>
</feature>
<feature type="transmembrane region" description="Helical" evidence="2">
    <location>
        <begin position="221"/>
        <end position="242"/>
    </location>
</feature>
<feature type="topological domain" description="Lumenal" evidence="1 2">
    <location>
        <begin position="243"/>
        <end position="624"/>
    </location>
</feature>
<feature type="region of interest" description="Disordered" evidence="4">
    <location>
        <begin position="572"/>
        <end position="624"/>
    </location>
</feature>
<feature type="compositionally biased region" description="Basic and acidic residues" evidence="4">
    <location>
        <begin position="583"/>
        <end position="611"/>
    </location>
</feature>
<feature type="active site" description="Nucleophile" evidence="2">
    <location>
        <position position="83"/>
    </location>
</feature>
<feature type="active site" evidence="2">
    <location>
        <position position="144"/>
    </location>
</feature>
<feature type="binding site" evidence="2">
    <location>
        <position position="43"/>
    </location>
    <ligand>
        <name>Ca(2+)</name>
        <dbReference type="ChEBI" id="CHEBI:29108"/>
    </ligand>
</feature>
<feature type="binding site" evidence="2">
    <location>
        <position position="44"/>
    </location>
    <ligand>
        <name>Ca(2+)</name>
        <dbReference type="ChEBI" id="CHEBI:29108"/>
    </ligand>
</feature>
<feature type="binding site" description="via 3-oxoalanine" evidence="2">
    <location>
        <position position="83"/>
    </location>
    <ligand>
        <name>Ca(2+)</name>
        <dbReference type="ChEBI" id="CHEBI:29108"/>
    </ligand>
</feature>
<feature type="binding site" evidence="2">
    <location>
        <position position="350"/>
    </location>
    <ligand>
        <name>Ca(2+)</name>
        <dbReference type="ChEBI" id="CHEBI:29108"/>
    </ligand>
</feature>
<feature type="binding site" evidence="2">
    <location>
        <position position="351"/>
    </location>
    <ligand>
        <name>Ca(2+)</name>
        <dbReference type="ChEBI" id="CHEBI:29108"/>
    </ligand>
</feature>
<feature type="modified residue" description="3-oxoalanine (Cys)" evidence="2">
    <location>
        <position position="83"/>
    </location>
</feature>
<feature type="glycosylation site" description="N-linked (GlcNAc...) asparagine" evidence="3">
    <location>
        <position position="55"/>
    </location>
</feature>
<feature type="glycosylation site" description="N-linked (GlcNAc...) asparagine" evidence="3">
    <location>
        <position position="465"/>
    </location>
</feature>
<feature type="disulfide bond" evidence="1">
    <location>
        <begin position="149"/>
        <end position="156"/>
    </location>
</feature>
<feature type="disulfide bond" evidence="1">
    <location>
        <begin position="178"/>
        <end position="250"/>
    </location>
</feature>
<feature type="disulfide bond" evidence="1">
    <location>
        <begin position="454"/>
        <end position="495"/>
    </location>
</feature>
<feature type="disulfide bond" evidence="1">
    <location>
        <begin position="487"/>
        <end position="493"/>
    </location>
</feature>
<dbReference type="EC" id="3.1.6.2" evidence="2"/>
<dbReference type="EMBL" id="U37545">
    <property type="protein sequence ID" value="AAB09308.1"/>
    <property type="molecule type" value="mRNA"/>
</dbReference>
<dbReference type="RefSeq" id="NP_033319.1">
    <property type="nucleotide sequence ID" value="NM_009293.1"/>
</dbReference>
<dbReference type="SMR" id="P50427"/>
<dbReference type="BioGRID" id="203559">
    <property type="interactions" value="3"/>
</dbReference>
<dbReference type="FunCoup" id="P50427">
    <property type="interactions" value="230"/>
</dbReference>
<dbReference type="IntAct" id="P50427">
    <property type="interactions" value="1"/>
</dbReference>
<dbReference type="GlyCosmos" id="P50427">
    <property type="glycosylation" value="2 sites, No reported glycans"/>
</dbReference>
<dbReference type="GlyGen" id="P50427">
    <property type="glycosylation" value="3 sites, 1 N-linked glycan (1 site)"/>
</dbReference>
<dbReference type="iPTMnet" id="P50427"/>
<dbReference type="PhosphoSitePlus" id="P50427"/>
<dbReference type="SwissPalm" id="P50427"/>
<dbReference type="jPOST" id="P50427"/>
<dbReference type="PeptideAtlas" id="P50427"/>
<dbReference type="ProteomicsDB" id="257094"/>
<dbReference type="Pumba" id="P50427"/>
<dbReference type="DNASU" id="20905"/>
<dbReference type="GeneID" id="20905"/>
<dbReference type="KEGG" id="mmu:20905"/>
<dbReference type="AGR" id="MGI:98438"/>
<dbReference type="CTD" id="412"/>
<dbReference type="MGI" id="MGI:98438">
    <property type="gene designation" value="Sts"/>
</dbReference>
<dbReference type="InParanoid" id="P50427"/>
<dbReference type="OrthoDB" id="83035at9989"/>
<dbReference type="PhylomeDB" id="P50427"/>
<dbReference type="Reactome" id="R-MMU-1663150">
    <property type="pathway name" value="The activation of arylsulfatases"/>
</dbReference>
<dbReference type="Reactome" id="R-MMU-196071">
    <property type="pathway name" value="Metabolism of steroid hormones"/>
</dbReference>
<dbReference type="Reactome" id="R-MMU-9840310">
    <property type="pathway name" value="Glycosphingolipid catabolism"/>
</dbReference>
<dbReference type="BioGRID-ORCS" id="20905">
    <property type="hits" value="0 hits in 2 CRISPR screens"/>
</dbReference>
<dbReference type="PRO" id="PR:P50427"/>
<dbReference type="Proteomes" id="UP000000589">
    <property type="component" value="Unplaced"/>
</dbReference>
<dbReference type="RNAct" id="P50427">
    <property type="molecule type" value="protein"/>
</dbReference>
<dbReference type="GO" id="GO:0005789">
    <property type="term" value="C:endoplasmic reticulum membrane"/>
    <property type="evidence" value="ECO:0007669"/>
    <property type="project" value="UniProtKB-SubCell"/>
</dbReference>
<dbReference type="GO" id="GO:0046872">
    <property type="term" value="F:metal ion binding"/>
    <property type="evidence" value="ECO:0007669"/>
    <property type="project" value="UniProtKB-KW"/>
</dbReference>
<dbReference type="GO" id="GO:0004773">
    <property type="term" value="F:steryl-sulfatase activity"/>
    <property type="evidence" value="ECO:0007669"/>
    <property type="project" value="UniProtKB-EC"/>
</dbReference>
<dbReference type="GO" id="GO:0008484">
    <property type="term" value="F:sulfuric ester hydrolase activity"/>
    <property type="evidence" value="ECO:0000266"/>
    <property type="project" value="MGI"/>
</dbReference>
<dbReference type="GO" id="GO:0007565">
    <property type="term" value="P:female pregnancy"/>
    <property type="evidence" value="ECO:0007669"/>
    <property type="project" value="UniProtKB-KW"/>
</dbReference>
<dbReference type="GO" id="GO:0008202">
    <property type="term" value="P:steroid metabolic process"/>
    <property type="evidence" value="ECO:0007669"/>
    <property type="project" value="UniProtKB-KW"/>
</dbReference>
<dbReference type="FunFam" id="3.30.1120.10:FF:000001">
    <property type="entry name" value="Arylsulfatase E"/>
    <property type="match status" value="1"/>
</dbReference>
<dbReference type="Gene3D" id="3.30.1120.10">
    <property type="match status" value="1"/>
</dbReference>
<dbReference type="Gene3D" id="3.40.720.10">
    <property type="entry name" value="Alkaline Phosphatase, subunit A"/>
    <property type="match status" value="1"/>
</dbReference>
<dbReference type="Gene3D" id="1.10.287.550">
    <property type="entry name" value="Helix hairpin bin"/>
    <property type="match status" value="1"/>
</dbReference>
<dbReference type="InterPro" id="IPR017850">
    <property type="entry name" value="Alkaline_phosphatase_core_sf"/>
</dbReference>
<dbReference type="InterPro" id="IPR050738">
    <property type="entry name" value="Sulfatase"/>
</dbReference>
<dbReference type="InterPro" id="IPR024607">
    <property type="entry name" value="Sulfatase_CS"/>
</dbReference>
<dbReference type="InterPro" id="IPR000917">
    <property type="entry name" value="Sulfatase_N"/>
</dbReference>
<dbReference type="PANTHER" id="PTHR42693">
    <property type="entry name" value="ARYLSULFATASE FAMILY MEMBER"/>
    <property type="match status" value="1"/>
</dbReference>
<dbReference type="PANTHER" id="PTHR42693:SF9">
    <property type="entry name" value="STERYL-SULFATASE"/>
    <property type="match status" value="1"/>
</dbReference>
<dbReference type="Pfam" id="PF00884">
    <property type="entry name" value="Sulfatase"/>
    <property type="match status" value="1"/>
</dbReference>
<dbReference type="Pfam" id="PF14707">
    <property type="entry name" value="Sulfatase_C"/>
    <property type="match status" value="1"/>
</dbReference>
<dbReference type="SUPFAM" id="SSF53649">
    <property type="entry name" value="Alkaline phosphatase-like"/>
    <property type="match status" value="1"/>
</dbReference>
<dbReference type="PROSITE" id="PS00523">
    <property type="entry name" value="SULFATASE_1"/>
    <property type="match status" value="1"/>
</dbReference>
<dbReference type="PROSITE" id="PS00149">
    <property type="entry name" value="SULFATASE_2"/>
    <property type="match status" value="1"/>
</dbReference>
<comment type="function">
    <text evidence="2">Catalyzes the conversion of sulfated steroid precursors, such as dehydroepiandrosterone sulfate (DHEA-S) and estrone sulfate to the free steroid.</text>
</comment>
<comment type="catalytic activity">
    <reaction evidence="2">
        <text>dehydroepiandrosterone 3-sulfate + H2O = 3beta-hydroxyandrost-5-en-17-one + sulfate + H(+)</text>
        <dbReference type="Rhea" id="RHEA:19873"/>
        <dbReference type="ChEBI" id="CHEBI:15377"/>
        <dbReference type="ChEBI" id="CHEBI:15378"/>
        <dbReference type="ChEBI" id="CHEBI:16189"/>
        <dbReference type="ChEBI" id="CHEBI:28689"/>
        <dbReference type="ChEBI" id="CHEBI:57905"/>
        <dbReference type="EC" id="3.1.6.2"/>
    </reaction>
</comment>
<comment type="catalytic activity">
    <reaction evidence="2">
        <text>estrone 3-sulfate + H2O = estrone + sulfate + H(+)</text>
        <dbReference type="Rhea" id="RHEA:31055"/>
        <dbReference type="ChEBI" id="CHEBI:15377"/>
        <dbReference type="ChEBI" id="CHEBI:15378"/>
        <dbReference type="ChEBI" id="CHEBI:16189"/>
        <dbReference type="ChEBI" id="CHEBI:17263"/>
        <dbReference type="ChEBI" id="CHEBI:60050"/>
    </reaction>
</comment>
<comment type="cofactor">
    <cofactor evidence="2">
        <name>Ca(2+)</name>
        <dbReference type="ChEBI" id="CHEBI:29108"/>
    </cofactor>
    <text evidence="2">Binds 1 Ca(2+) ion per subunit.</text>
</comment>
<comment type="subunit">
    <text evidence="2">Homodimer.</text>
</comment>
<comment type="subcellular location">
    <subcellularLocation>
        <location evidence="2">Microsome membrane</location>
        <topology>Multi-pass membrane protein</topology>
    </subcellularLocation>
    <subcellularLocation>
        <location evidence="2">Endoplasmic reticulum membrane</location>
        <topology evidence="5">Multi-pass membrane protein</topology>
    </subcellularLocation>
    <text>The sequence shows several membrane-spanning domains that could serve to anchor the protein in the microsomal membrane.</text>
</comment>
<comment type="PTM">
    <text evidence="2">The conversion to 3-oxoalanine (also known as C-formylglycine, FGly), of a serine or cysteine residue in prokaryotes and of a cysteine residue in eukaryotes, is critical for catalytic activity.</text>
</comment>
<comment type="similarity">
    <text evidence="5">Belongs to the sulfatase family.</text>
</comment>
<evidence type="ECO:0000250" key="1"/>
<evidence type="ECO:0000250" key="2">
    <source>
        <dbReference type="UniProtKB" id="P08842"/>
    </source>
</evidence>
<evidence type="ECO:0000255" key="3"/>
<evidence type="ECO:0000256" key="4">
    <source>
        <dbReference type="SAM" id="MobiDB-lite"/>
    </source>
</evidence>
<evidence type="ECO:0000305" key="5"/>
<accession>P50427</accession>